<gene>
    <name evidence="1" type="primary">hemF</name>
    <name type="ordered locus">PA14_00280</name>
</gene>
<dbReference type="EC" id="1.3.3.3" evidence="1"/>
<dbReference type="EMBL" id="CP000438">
    <property type="protein sequence ID" value="ABJ14980.1"/>
    <property type="molecule type" value="Genomic_DNA"/>
</dbReference>
<dbReference type="RefSeq" id="WP_003097311.1">
    <property type="nucleotide sequence ID" value="NZ_CP034244.1"/>
</dbReference>
<dbReference type="SMR" id="Q02V57"/>
<dbReference type="KEGG" id="pau:PA14_00280"/>
<dbReference type="PseudoCAP" id="PA14_00280"/>
<dbReference type="HOGENOM" id="CLU_026169_0_1_6"/>
<dbReference type="BioCyc" id="PAER208963:G1G74-24-MONOMER"/>
<dbReference type="UniPathway" id="UPA00251">
    <property type="reaction ID" value="UER00322"/>
</dbReference>
<dbReference type="Proteomes" id="UP000000653">
    <property type="component" value="Chromosome"/>
</dbReference>
<dbReference type="GO" id="GO:0005737">
    <property type="term" value="C:cytoplasm"/>
    <property type="evidence" value="ECO:0007669"/>
    <property type="project" value="UniProtKB-SubCell"/>
</dbReference>
<dbReference type="GO" id="GO:0004109">
    <property type="term" value="F:coproporphyrinogen oxidase activity"/>
    <property type="evidence" value="ECO:0007669"/>
    <property type="project" value="UniProtKB-UniRule"/>
</dbReference>
<dbReference type="GO" id="GO:0046872">
    <property type="term" value="F:metal ion binding"/>
    <property type="evidence" value="ECO:0007669"/>
    <property type="project" value="UniProtKB-KW"/>
</dbReference>
<dbReference type="GO" id="GO:0042803">
    <property type="term" value="F:protein homodimerization activity"/>
    <property type="evidence" value="ECO:0000250"/>
    <property type="project" value="UniProtKB"/>
</dbReference>
<dbReference type="GO" id="GO:0006782">
    <property type="term" value="P:protoporphyrinogen IX biosynthetic process"/>
    <property type="evidence" value="ECO:0007669"/>
    <property type="project" value="UniProtKB-UniRule"/>
</dbReference>
<dbReference type="FunFam" id="3.40.1500.10:FF:000001">
    <property type="entry name" value="Oxygen-dependent coproporphyrinogen-III oxidase"/>
    <property type="match status" value="1"/>
</dbReference>
<dbReference type="Gene3D" id="3.40.1500.10">
    <property type="entry name" value="Coproporphyrinogen III oxidase, aerobic"/>
    <property type="match status" value="1"/>
</dbReference>
<dbReference type="HAMAP" id="MF_00333">
    <property type="entry name" value="Coprogen_oxidas"/>
    <property type="match status" value="1"/>
</dbReference>
<dbReference type="InterPro" id="IPR001260">
    <property type="entry name" value="Coprogen_oxidase_aer"/>
</dbReference>
<dbReference type="InterPro" id="IPR036406">
    <property type="entry name" value="Coprogen_oxidase_aer_sf"/>
</dbReference>
<dbReference type="InterPro" id="IPR018375">
    <property type="entry name" value="Coprogen_oxidase_CS"/>
</dbReference>
<dbReference type="NCBIfam" id="NF003727">
    <property type="entry name" value="PRK05330.1"/>
    <property type="match status" value="1"/>
</dbReference>
<dbReference type="PANTHER" id="PTHR10755">
    <property type="entry name" value="COPROPORPHYRINOGEN III OXIDASE, MITOCHONDRIAL"/>
    <property type="match status" value="1"/>
</dbReference>
<dbReference type="PANTHER" id="PTHR10755:SF0">
    <property type="entry name" value="OXYGEN-DEPENDENT COPROPORPHYRINOGEN-III OXIDASE, MITOCHONDRIAL"/>
    <property type="match status" value="1"/>
</dbReference>
<dbReference type="Pfam" id="PF01218">
    <property type="entry name" value="Coprogen_oxidas"/>
    <property type="match status" value="1"/>
</dbReference>
<dbReference type="PIRSF" id="PIRSF000166">
    <property type="entry name" value="Coproporphyri_ox"/>
    <property type="match status" value="1"/>
</dbReference>
<dbReference type="PRINTS" id="PR00073">
    <property type="entry name" value="COPRGNOXDASE"/>
</dbReference>
<dbReference type="SUPFAM" id="SSF102886">
    <property type="entry name" value="Coproporphyrinogen III oxidase"/>
    <property type="match status" value="1"/>
</dbReference>
<dbReference type="PROSITE" id="PS01021">
    <property type="entry name" value="COPROGEN_OXIDASE"/>
    <property type="match status" value="1"/>
</dbReference>
<protein>
    <recommendedName>
        <fullName evidence="1">Oxygen-dependent coproporphyrinogen-III oxidase</fullName>
        <shortName evidence="1">CPO</shortName>
        <shortName evidence="1">Coprogen oxidase</shortName>
        <shortName evidence="1">Coproporphyrinogenase</shortName>
        <ecNumber evidence="1">1.3.3.3</ecNumber>
    </recommendedName>
</protein>
<reference key="1">
    <citation type="journal article" date="2006" name="Genome Biol.">
        <title>Genomic analysis reveals that Pseudomonas aeruginosa virulence is combinatorial.</title>
        <authorList>
            <person name="Lee D.G."/>
            <person name="Urbach J.M."/>
            <person name="Wu G."/>
            <person name="Liberati N.T."/>
            <person name="Feinbaum R.L."/>
            <person name="Miyata S."/>
            <person name="Diggins L.T."/>
            <person name="He J."/>
            <person name="Saucier M."/>
            <person name="Deziel E."/>
            <person name="Friedman L."/>
            <person name="Li L."/>
            <person name="Grills G."/>
            <person name="Montgomery K."/>
            <person name="Kucherlapati R."/>
            <person name="Rahme L.G."/>
            <person name="Ausubel F.M."/>
        </authorList>
    </citation>
    <scope>NUCLEOTIDE SEQUENCE [LARGE SCALE GENOMIC DNA]</scope>
    <source>
        <strain>UCBPP-PA14</strain>
    </source>
</reference>
<comment type="function">
    <text evidence="1">Involved in the heme biosynthesis. Catalyzes the aerobic oxidative decarboxylation of propionate groups of rings A and B of coproporphyrinogen-III to yield the vinyl groups in protoporphyrinogen-IX.</text>
</comment>
<comment type="catalytic activity">
    <reaction evidence="1">
        <text>coproporphyrinogen III + O2 + 2 H(+) = protoporphyrinogen IX + 2 CO2 + 2 H2O</text>
        <dbReference type="Rhea" id="RHEA:18257"/>
        <dbReference type="ChEBI" id="CHEBI:15377"/>
        <dbReference type="ChEBI" id="CHEBI:15378"/>
        <dbReference type="ChEBI" id="CHEBI:15379"/>
        <dbReference type="ChEBI" id="CHEBI:16526"/>
        <dbReference type="ChEBI" id="CHEBI:57307"/>
        <dbReference type="ChEBI" id="CHEBI:57309"/>
        <dbReference type="EC" id="1.3.3.3"/>
    </reaction>
</comment>
<comment type="cofactor">
    <cofactor evidence="1">
        <name>a divalent metal cation</name>
        <dbReference type="ChEBI" id="CHEBI:60240"/>
    </cofactor>
</comment>
<comment type="pathway">
    <text evidence="1">Porphyrin-containing compound metabolism; protoporphyrin-IX biosynthesis; protoporphyrinogen-IX from coproporphyrinogen-III (O2 route): step 1/1.</text>
</comment>
<comment type="subunit">
    <text evidence="1">Homodimer.</text>
</comment>
<comment type="subcellular location">
    <subcellularLocation>
        <location evidence="1">Cytoplasm</location>
    </subcellularLocation>
</comment>
<comment type="similarity">
    <text evidence="1">Belongs to the aerobic coproporphyrinogen-III oxidase family.</text>
</comment>
<proteinExistence type="inferred from homology"/>
<sequence>MTDRIAAVKTYLLDLQDRICAALEAEDGKARFAEDAWERPAGGGGRTRVIGDGALIEKGGVNFSHVFGDSLPPSASAHRPELAGRGFQALGVSLVIHPENPHVPTSHANVRFFCAEKEGEEPVWWFGGGFDLTPYYAHEEDCVHWHRVARDACAPFGADVYPRYKEWCDRYFHLKHRNEPRGIGGLFFDDLNQWDFDTCFAFIRAIGDAYIDAYLPIVQRRKHTPFDERQREFQAYRRGRYVEFNLVFDRGTLFGLQSGGRTESILMSLPPQVRWGYDWKPEPGSEEARLTEYFLADRDWLAGQP</sequence>
<name>HEM6_PSEAB</name>
<accession>Q02V57</accession>
<keyword id="KW-0963">Cytoplasm</keyword>
<keyword id="KW-0350">Heme biosynthesis</keyword>
<keyword id="KW-0479">Metal-binding</keyword>
<keyword id="KW-0560">Oxidoreductase</keyword>
<keyword id="KW-0627">Porphyrin biosynthesis</keyword>
<evidence type="ECO:0000255" key="1">
    <source>
        <dbReference type="HAMAP-Rule" id="MF_00333"/>
    </source>
</evidence>
<feature type="chain" id="PRO_1000019484" description="Oxygen-dependent coproporphyrinogen-III oxidase">
    <location>
        <begin position="1"/>
        <end position="305"/>
    </location>
</feature>
<feature type="region of interest" description="Important for dimerization" evidence="1">
    <location>
        <begin position="241"/>
        <end position="276"/>
    </location>
</feature>
<feature type="active site" description="Proton donor" evidence="1">
    <location>
        <position position="107"/>
    </location>
</feature>
<feature type="binding site" evidence="1">
    <location>
        <position position="93"/>
    </location>
    <ligand>
        <name>substrate</name>
    </ligand>
</feature>
<feature type="binding site" evidence="1">
    <location>
        <position position="97"/>
    </location>
    <ligand>
        <name>a divalent metal cation</name>
        <dbReference type="ChEBI" id="CHEBI:60240"/>
    </ligand>
</feature>
<feature type="binding site" evidence="1">
    <location>
        <position position="107"/>
    </location>
    <ligand>
        <name>a divalent metal cation</name>
        <dbReference type="ChEBI" id="CHEBI:60240"/>
    </ligand>
</feature>
<feature type="binding site" evidence="1">
    <location>
        <begin position="109"/>
        <end position="111"/>
    </location>
    <ligand>
        <name>substrate</name>
    </ligand>
</feature>
<feature type="binding site" evidence="1">
    <location>
        <position position="146"/>
    </location>
    <ligand>
        <name>a divalent metal cation</name>
        <dbReference type="ChEBI" id="CHEBI:60240"/>
    </ligand>
</feature>
<feature type="binding site" evidence="1">
    <location>
        <position position="176"/>
    </location>
    <ligand>
        <name>a divalent metal cation</name>
        <dbReference type="ChEBI" id="CHEBI:60240"/>
    </ligand>
</feature>
<feature type="binding site" evidence="1">
    <location>
        <begin position="259"/>
        <end position="261"/>
    </location>
    <ligand>
        <name>substrate</name>
    </ligand>
</feature>
<feature type="site" description="Important for dimerization" evidence="1">
    <location>
        <position position="176"/>
    </location>
</feature>
<organism>
    <name type="scientific">Pseudomonas aeruginosa (strain UCBPP-PA14)</name>
    <dbReference type="NCBI Taxonomy" id="208963"/>
    <lineage>
        <taxon>Bacteria</taxon>
        <taxon>Pseudomonadati</taxon>
        <taxon>Pseudomonadota</taxon>
        <taxon>Gammaproteobacteria</taxon>
        <taxon>Pseudomonadales</taxon>
        <taxon>Pseudomonadaceae</taxon>
        <taxon>Pseudomonas</taxon>
    </lineage>
</organism>